<organism>
    <name type="scientific">Salmonella choleraesuis (strain SC-B67)</name>
    <dbReference type="NCBI Taxonomy" id="321314"/>
    <lineage>
        <taxon>Bacteria</taxon>
        <taxon>Pseudomonadati</taxon>
        <taxon>Pseudomonadota</taxon>
        <taxon>Gammaproteobacteria</taxon>
        <taxon>Enterobacterales</taxon>
        <taxon>Enterobacteriaceae</taxon>
        <taxon>Salmonella</taxon>
    </lineage>
</organism>
<evidence type="ECO:0000255" key="1">
    <source>
        <dbReference type="HAMAP-Rule" id="MF_00174"/>
    </source>
</evidence>
<keyword id="KW-0067">ATP-binding</keyword>
<keyword id="KW-0436">Ligase</keyword>
<keyword id="KW-0547">Nucleotide-binding</keyword>
<name>EPMA_SALCH</name>
<proteinExistence type="inferred from homology"/>
<feature type="chain" id="PRO_1000023629" description="Elongation factor P--(R)-beta-lysine ligase">
    <location>
        <begin position="1"/>
        <end position="325"/>
    </location>
</feature>
<feature type="binding site" evidence="1">
    <location>
        <begin position="76"/>
        <end position="78"/>
    </location>
    <ligand>
        <name>substrate</name>
    </ligand>
</feature>
<feature type="binding site" evidence="1">
    <location>
        <begin position="100"/>
        <end position="102"/>
    </location>
    <ligand>
        <name>ATP</name>
        <dbReference type="ChEBI" id="CHEBI:30616"/>
    </ligand>
</feature>
<feature type="binding site" evidence="1">
    <location>
        <position position="109"/>
    </location>
    <ligand>
        <name>ATP</name>
        <dbReference type="ChEBI" id="CHEBI:30616"/>
    </ligand>
</feature>
<feature type="binding site" evidence="1">
    <location>
        <position position="118"/>
    </location>
    <ligand>
        <name>substrate</name>
    </ligand>
</feature>
<feature type="binding site" evidence="1">
    <location>
        <begin position="244"/>
        <end position="245"/>
    </location>
    <ligand>
        <name>ATP</name>
        <dbReference type="ChEBI" id="CHEBI:30616"/>
    </ligand>
</feature>
<feature type="binding site" evidence="1">
    <location>
        <position position="251"/>
    </location>
    <ligand>
        <name>substrate</name>
    </ligand>
</feature>
<feature type="binding site" evidence="1">
    <location>
        <position position="300"/>
    </location>
    <ligand>
        <name>ATP</name>
        <dbReference type="ChEBI" id="CHEBI:30616"/>
    </ligand>
</feature>
<sequence>MSETATWQPSASIPNLLKRAAIMAEIRRFFADRGVLEVETPCMSQATVTDIHLFPFETRFVGPGHSQGMNLYLMTSPEYHMKRLLAAGCGPVFQLCRSFRNEEMGRHHNPEFTMLEWYRPHYDMYRLMNEVDDLLQQVLDCQPAESLSYQQAFQRHLEIDPLSADKTQLREAAAKLDLSNIADTEEDRDTLLQLLFTMGVEPHIGKEKPTFIYHFPASQASLAQISTEDHRVAERFEVYYKGIELANGFHELTDAREQQQRFEQDNRKRAARGLPQQPIDQNLLDALAAGLPDCSGVALGVDRLVMLALGAESLADVIAFTVDRA</sequence>
<gene>
    <name evidence="1" type="primary">epmA</name>
    <name type="synonym">yjeA</name>
    <name type="ordered locus">SCH_4223</name>
</gene>
<reference key="1">
    <citation type="journal article" date="2005" name="Nucleic Acids Res.">
        <title>The genome sequence of Salmonella enterica serovar Choleraesuis, a highly invasive and resistant zoonotic pathogen.</title>
        <authorList>
            <person name="Chiu C.-H."/>
            <person name="Tang P."/>
            <person name="Chu C."/>
            <person name="Hu S."/>
            <person name="Bao Q."/>
            <person name="Yu J."/>
            <person name="Chou Y.-Y."/>
            <person name="Wang H.-S."/>
            <person name="Lee Y.-S."/>
        </authorList>
    </citation>
    <scope>NUCLEOTIDE SEQUENCE [LARGE SCALE GENOMIC DNA]</scope>
    <source>
        <strain>SC-B67</strain>
    </source>
</reference>
<comment type="function">
    <text evidence="1">With EpmB is involved in the beta-lysylation step of the post-translational modification of translation elongation factor P (EF-P) on 'Lys-34'. Catalyzes the ATP-dependent activation of (R)-beta-lysine produced by EpmB, forming a lysyl-adenylate, from which the beta-lysyl moiety is then transferred to the epsilon-amino group of EF-P 'Lys-34'.</text>
</comment>
<comment type="catalytic activity">
    <reaction evidence="1">
        <text>D-beta-lysine + L-lysyl-[protein] + ATP = N(6)-((3R)-3,6-diaminohexanoyl)-L-lysyl-[protein] + AMP + diphosphate + H(+)</text>
        <dbReference type="Rhea" id="RHEA:83435"/>
        <dbReference type="Rhea" id="RHEA-COMP:9752"/>
        <dbReference type="Rhea" id="RHEA-COMP:20131"/>
        <dbReference type="ChEBI" id="CHEBI:15378"/>
        <dbReference type="ChEBI" id="CHEBI:29969"/>
        <dbReference type="ChEBI" id="CHEBI:30616"/>
        <dbReference type="ChEBI" id="CHEBI:33019"/>
        <dbReference type="ChEBI" id="CHEBI:84138"/>
        <dbReference type="ChEBI" id="CHEBI:156053"/>
        <dbReference type="ChEBI" id="CHEBI:456215"/>
    </reaction>
    <physiologicalReaction direction="left-to-right" evidence="1">
        <dbReference type="Rhea" id="RHEA:83436"/>
    </physiologicalReaction>
</comment>
<comment type="subunit">
    <text evidence="1">Homodimer.</text>
</comment>
<comment type="similarity">
    <text evidence="1">Belongs to the class-II aminoacyl-tRNA synthetase family. EpmA subfamily.</text>
</comment>
<accession>Q57GN3</accession>
<protein>
    <recommendedName>
        <fullName evidence="1">Elongation factor P--(R)-beta-lysine ligase</fullName>
        <shortName evidence="1">EF-P--(R)-beta-lysine ligase</shortName>
        <ecNumber evidence="1">6.3.2.-</ecNumber>
    </recommendedName>
    <alternativeName>
        <fullName evidence="1">EF-P post-translational modification enzyme A</fullName>
    </alternativeName>
    <alternativeName>
        <fullName evidence="1">EF-P-lysine lysyltransferase</fullName>
    </alternativeName>
</protein>
<dbReference type="EC" id="6.3.2.-" evidence="1"/>
<dbReference type="EMBL" id="AE017220">
    <property type="protein sequence ID" value="AAX68129.1"/>
    <property type="molecule type" value="Genomic_DNA"/>
</dbReference>
<dbReference type="RefSeq" id="WP_000004797.1">
    <property type="nucleotide sequence ID" value="NC_006905.1"/>
</dbReference>
<dbReference type="SMR" id="Q57GN3"/>
<dbReference type="KEGG" id="sec:SCH_4223"/>
<dbReference type="HOGENOM" id="CLU_008255_1_1_6"/>
<dbReference type="Proteomes" id="UP000000538">
    <property type="component" value="Chromosome"/>
</dbReference>
<dbReference type="GO" id="GO:0005829">
    <property type="term" value="C:cytosol"/>
    <property type="evidence" value="ECO:0007669"/>
    <property type="project" value="TreeGrafter"/>
</dbReference>
<dbReference type="GO" id="GO:0016880">
    <property type="term" value="F:acid-ammonia (or amide) ligase activity"/>
    <property type="evidence" value="ECO:0007669"/>
    <property type="project" value="UniProtKB-UniRule"/>
</dbReference>
<dbReference type="GO" id="GO:0005524">
    <property type="term" value="F:ATP binding"/>
    <property type="evidence" value="ECO:0007669"/>
    <property type="project" value="UniProtKB-UniRule"/>
</dbReference>
<dbReference type="GO" id="GO:0004824">
    <property type="term" value="F:lysine-tRNA ligase activity"/>
    <property type="evidence" value="ECO:0007669"/>
    <property type="project" value="InterPro"/>
</dbReference>
<dbReference type="GO" id="GO:0000049">
    <property type="term" value="F:tRNA binding"/>
    <property type="evidence" value="ECO:0007669"/>
    <property type="project" value="TreeGrafter"/>
</dbReference>
<dbReference type="GO" id="GO:0006430">
    <property type="term" value="P:lysyl-tRNA aminoacylation"/>
    <property type="evidence" value="ECO:0007669"/>
    <property type="project" value="InterPro"/>
</dbReference>
<dbReference type="FunFam" id="3.30.930.10:FF:000017">
    <property type="entry name" value="Elongation factor P--(R)-beta-lysine ligase"/>
    <property type="match status" value="1"/>
</dbReference>
<dbReference type="Gene3D" id="3.30.930.10">
    <property type="entry name" value="Bira Bifunctional Protein, Domain 2"/>
    <property type="match status" value="1"/>
</dbReference>
<dbReference type="HAMAP" id="MF_00174">
    <property type="entry name" value="EF_P_modif_A"/>
    <property type="match status" value="1"/>
</dbReference>
<dbReference type="InterPro" id="IPR004364">
    <property type="entry name" value="Aa-tRNA-synt_II"/>
</dbReference>
<dbReference type="InterPro" id="IPR006195">
    <property type="entry name" value="aa-tRNA-synth_II"/>
</dbReference>
<dbReference type="InterPro" id="IPR045864">
    <property type="entry name" value="aa-tRNA-synth_II/BPL/LPL"/>
</dbReference>
<dbReference type="InterPro" id="IPR004525">
    <property type="entry name" value="EpmA"/>
</dbReference>
<dbReference type="InterPro" id="IPR018149">
    <property type="entry name" value="Lys-tRNA-synth_II_C"/>
</dbReference>
<dbReference type="NCBIfam" id="TIGR00462">
    <property type="entry name" value="genX"/>
    <property type="match status" value="1"/>
</dbReference>
<dbReference type="NCBIfam" id="NF006828">
    <property type="entry name" value="PRK09350.1"/>
    <property type="match status" value="1"/>
</dbReference>
<dbReference type="PANTHER" id="PTHR42918:SF6">
    <property type="entry name" value="ELONGATION FACTOR P--(R)-BETA-LYSINE LIGASE"/>
    <property type="match status" value="1"/>
</dbReference>
<dbReference type="PANTHER" id="PTHR42918">
    <property type="entry name" value="LYSYL-TRNA SYNTHETASE"/>
    <property type="match status" value="1"/>
</dbReference>
<dbReference type="Pfam" id="PF00152">
    <property type="entry name" value="tRNA-synt_2"/>
    <property type="match status" value="1"/>
</dbReference>
<dbReference type="PRINTS" id="PR00982">
    <property type="entry name" value="TRNASYNTHLYS"/>
</dbReference>
<dbReference type="SUPFAM" id="SSF55681">
    <property type="entry name" value="Class II aaRS and biotin synthetases"/>
    <property type="match status" value="1"/>
</dbReference>
<dbReference type="PROSITE" id="PS50862">
    <property type="entry name" value="AA_TRNA_LIGASE_II"/>
    <property type="match status" value="1"/>
</dbReference>